<sequence>MADLLSSLKNLSSSSGVYQYFDKNRQLLYIGKAKNLKKRIKSYFSVRNNEITPNPRTSLRVQMMVKQIAFLETILVENEQDALILENSLIKQLKPKYNILLRDDKTYPYIYMDFSIDFPIPLITRKILKQPGVKYFGPFTSGAKDILDSLYELLPLVQKKNCIKDKKACMFYQIERCKAPCEDKITKEEYLKIAKECLEMIENKDRLIKELELKMERLSSNLRFEEALIYRDRIAKIQKIAPFTCMDLAKLYDLDIFAFYGGNNKAVLVKMFMRGGKIISSAFEKIHSLNGFDTDEAMKQAIINHYQSHLPLMPEQILLSACSNETLKELQEFISHQYSKKIALSIPKKGDKLALIEIAMKNAQEIFSQEKTSNEDRILEEARSLFNLECVPYRVEIFDTSHHSNSQCVGGMVVYENNAFQKDSYRRYHLKGSNEYDQMSELLTRRALDFAKEPPPNLWVIDGGRAQLNIALEILKSSGSFVEVIAISKEKRDSKAYRSKGGAKDIIHTISHTFKLLPSDKRLQWVQKLRDESHRYAINFHRSTKLKNMKQIALLKEKGIGEASVKKLLDYFGSFEAIEKASDQEKNAVLKKRK</sequence>
<keyword id="KW-0963">Cytoplasm</keyword>
<keyword id="KW-0227">DNA damage</keyword>
<keyword id="KW-0228">DNA excision</keyword>
<keyword id="KW-0234">DNA repair</keyword>
<keyword id="KW-0267">Excision nuclease</keyword>
<keyword id="KW-0742">SOS response</keyword>
<feature type="chain" id="PRO_0000138306" description="UvrABC system protein C">
    <location>
        <begin position="1"/>
        <end position="594"/>
    </location>
</feature>
<feature type="domain" description="GIY-YIG" evidence="1">
    <location>
        <begin position="13"/>
        <end position="99"/>
    </location>
</feature>
<feature type="domain" description="UVR" evidence="1">
    <location>
        <begin position="205"/>
        <end position="240"/>
    </location>
</feature>
<comment type="function">
    <text evidence="1">The UvrABC repair system catalyzes the recognition and processing of DNA lesions. UvrC both incises the 5' and 3' sides of the lesion. The N-terminal half is responsible for the 3' incision and the C-terminal half is responsible for the 5' incision.</text>
</comment>
<comment type="subunit">
    <text evidence="1">Interacts with UvrB in an incision complex.</text>
</comment>
<comment type="subcellular location">
    <subcellularLocation>
        <location evidence="1">Cytoplasm</location>
    </subcellularLocation>
</comment>
<comment type="similarity">
    <text evidence="1">Belongs to the UvrC family.</text>
</comment>
<evidence type="ECO:0000255" key="1">
    <source>
        <dbReference type="HAMAP-Rule" id="MF_00203"/>
    </source>
</evidence>
<organism>
    <name type="scientific">Helicobacter pylori (strain J99 / ATCC 700824)</name>
    <name type="common">Campylobacter pylori J99</name>
    <dbReference type="NCBI Taxonomy" id="85963"/>
    <lineage>
        <taxon>Bacteria</taxon>
        <taxon>Pseudomonadati</taxon>
        <taxon>Campylobacterota</taxon>
        <taxon>Epsilonproteobacteria</taxon>
        <taxon>Campylobacterales</taxon>
        <taxon>Helicobacteraceae</taxon>
        <taxon>Helicobacter</taxon>
    </lineage>
</organism>
<reference key="1">
    <citation type="journal article" date="1999" name="Nature">
        <title>Genomic sequence comparison of two unrelated isolates of the human gastric pathogen Helicobacter pylori.</title>
        <authorList>
            <person name="Alm R.A."/>
            <person name="Ling L.-S.L."/>
            <person name="Moir D.T."/>
            <person name="King B.L."/>
            <person name="Brown E.D."/>
            <person name="Doig P.C."/>
            <person name="Smith D.R."/>
            <person name="Noonan B."/>
            <person name="Guild B.C."/>
            <person name="deJonge B.L."/>
            <person name="Carmel G."/>
            <person name="Tummino P.J."/>
            <person name="Caruso A."/>
            <person name="Uria-Nickelsen M."/>
            <person name="Mills D.M."/>
            <person name="Ives C."/>
            <person name="Gibson R."/>
            <person name="Merberg D."/>
            <person name="Mills S.D."/>
            <person name="Jiang Q."/>
            <person name="Taylor D.E."/>
            <person name="Vovis G.F."/>
            <person name="Trust T.J."/>
        </authorList>
    </citation>
    <scope>NUCLEOTIDE SEQUENCE [LARGE SCALE GENOMIC DNA]</scope>
    <source>
        <strain>J99 / ATCC 700824</strain>
    </source>
</reference>
<accession>Q9ZL21</accession>
<name>UVRC_HELPJ</name>
<proteinExistence type="inferred from homology"/>
<dbReference type="EMBL" id="AE001439">
    <property type="protein sequence ID" value="AAD06337.1"/>
    <property type="molecule type" value="Genomic_DNA"/>
</dbReference>
<dbReference type="PIR" id="B71893">
    <property type="entry name" value="B71893"/>
</dbReference>
<dbReference type="RefSeq" id="WP_000774433.1">
    <property type="nucleotide sequence ID" value="NC_000921.1"/>
</dbReference>
<dbReference type="SMR" id="Q9ZL21"/>
<dbReference type="KEGG" id="hpj:jhp_0760"/>
<dbReference type="PATRIC" id="fig|85963.30.peg.216"/>
<dbReference type="eggNOG" id="COG0322">
    <property type="taxonomic scope" value="Bacteria"/>
</dbReference>
<dbReference type="Proteomes" id="UP000000804">
    <property type="component" value="Chromosome"/>
</dbReference>
<dbReference type="GO" id="GO:0005737">
    <property type="term" value="C:cytoplasm"/>
    <property type="evidence" value="ECO:0007669"/>
    <property type="project" value="UniProtKB-SubCell"/>
</dbReference>
<dbReference type="GO" id="GO:0009380">
    <property type="term" value="C:excinuclease repair complex"/>
    <property type="evidence" value="ECO:0007669"/>
    <property type="project" value="InterPro"/>
</dbReference>
<dbReference type="GO" id="GO:0003677">
    <property type="term" value="F:DNA binding"/>
    <property type="evidence" value="ECO:0007669"/>
    <property type="project" value="UniProtKB-UniRule"/>
</dbReference>
<dbReference type="GO" id="GO:0009381">
    <property type="term" value="F:excinuclease ABC activity"/>
    <property type="evidence" value="ECO:0007669"/>
    <property type="project" value="UniProtKB-UniRule"/>
</dbReference>
<dbReference type="GO" id="GO:0006289">
    <property type="term" value="P:nucleotide-excision repair"/>
    <property type="evidence" value="ECO:0007669"/>
    <property type="project" value="UniProtKB-UniRule"/>
</dbReference>
<dbReference type="GO" id="GO:0009432">
    <property type="term" value="P:SOS response"/>
    <property type="evidence" value="ECO:0007669"/>
    <property type="project" value="UniProtKB-UniRule"/>
</dbReference>
<dbReference type="CDD" id="cd10434">
    <property type="entry name" value="GIY-YIG_UvrC_Cho"/>
    <property type="match status" value="1"/>
</dbReference>
<dbReference type="FunFam" id="3.40.1440.10:FF:000001">
    <property type="entry name" value="UvrABC system protein C"/>
    <property type="match status" value="1"/>
</dbReference>
<dbReference type="Gene3D" id="1.10.150.20">
    <property type="entry name" value="5' to 3' exonuclease, C-terminal subdomain"/>
    <property type="match status" value="1"/>
</dbReference>
<dbReference type="Gene3D" id="3.40.1440.10">
    <property type="entry name" value="GIY-YIG endonuclease"/>
    <property type="match status" value="1"/>
</dbReference>
<dbReference type="Gene3D" id="4.10.860.10">
    <property type="entry name" value="UVR domain"/>
    <property type="match status" value="1"/>
</dbReference>
<dbReference type="Gene3D" id="3.30.420.340">
    <property type="entry name" value="UvrC, RNAse H endonuclease domain"/>
    <property type="match status" value="1"/>
</dbReference>
<dbReference type="HAMAP" id="MF_00203">
    <property type="entry name" value="UvrC"/>
    <property type="match status" value="1"/>
</dbReference>
<dbReference type="InterPro" id="IPR000305">
    <property type="entry name" value="GIY-YIG_endonuc"/>
</dbReference>
<dbReference type="InterPro" id="IPR035901">
    <property type="entry name" value="GIY-YIG_endonuc_sf"/>
</dbReference>
<dbReference type="InterPro" id="IPR047296">
    <property type="entry name" value="GIY-YIG_UvrC_Cho"/>
</dbReference>
<dbReference type="InterPro" id="IPR010994">
    <property type="entry name" value="RuvA_2-like"/>
</dbReference>
<dbReference type="InterPro" id="IPR001943">
    <property type="entry name" value="UVR_dom"/>
</dbReference>
<dbReference type="InterPro" id="IPR036876">
    <property type="entry name" value="UVR_dom_sf"/>
</dbReference>
<dbReference type="InterPro" id="IPR050066">
    <property type="entry name" value="UvrABC_protein_C"/>
</dbReference>
<dbReference type="InterPro" id="IPR004791">
    <property type="entry name" value="UvrC"/>
</dbReference>
<dbReference type="InterPro" id="IPR001162">
    <property type="entry name" value="UvrC_RNase_H_dom"/>
</dbReference>
<dbReference type="InterPro" id="IPR038476">
    <property type="entry name" value="UvrC_RNase_H_dom_sf"/>
</dbReference>
<dbReference type="NCBIfam" id="TIGR00194">
    <property type="entry name" value="uvrC"/>
    <property type="match status" value="1"/>
</dbReference>
<dbReference type="PANTHER" id="PTHR30562:SF1">
    <property type="entry name" value="UVRABC SYSTEM PROTEIN C"/>
    <property type="match status" value="1"/>
</dbReference>
<dbReference type="PANTHER" id="PTHR30562">
    <property type="entry name" value="UVRC/OXIDOREDUCTASE"/>
    <property type="match status" value="1"/>
</dbReference>
<dbReference type="Pfam" id="PF01541">
    <property type="entry name" value="GIY-YIG"/>
    <property type="match status" value="1"/>
</dbReference>
<dbReference type="Pfam" id="PF02151">
    <property type="entry name" value="UVR"/>
    <property type="match status" value="1"/>
</dbReference>
<dbReference type="Pfam" id="PF22920">
    <property type="entry name" value="UvrC_RNaseH"/>
    <property type="match status" value="1"/>
</dbReference>
<dbReference type="Pfam" id="PF08459">
    <property type="entry name" value="UvrC_RNaseH_dom"/>
    <property type="match status" value="1"/>
</dbReference>
<dbReference type="SMART" id="SM00465">
    <property type="entry name" value="GIYc"/>
    <property type="match status" value="1"/>
</dbReference>
<dbReference type="SUPFAM" id="SSF46600">
    <property type="entry name" value="C-terminal UvrC-binding domain of UvrB"/>
    <property type="match status" value="1"/>
</dbReference>
<dbReference type="SUPFAM" id="SSF82771">
    <property type="entry name" value="GIY-YIG endonuclease"/>
    <property type="match status" value="1"/>
</dbReference>
<dbReference type="SUPFAM" id="SSF47781">
    <property type="entry name" value="RuvA domain 2-like"/>
    <property type="match status" value="1"/>
</dbReference>
<dbReference type="PROSITE" id="PS50164">
    <property type="entry name" value="GIY_YIG"/>
    <property type="match status" value="1"/>
</dbReference>
<dbReference type="PROSITE" id="PS50151">
    <property type="entry name" value="UVR"/>
    <property type="match status" value="1"/>
</dbReference>
<dbReference type="PROSITE" id="PS50165">
    <property type="entry name" value="UVRC"/>
    <property type="match status" value="1"/>
</dbReference>
<gene>
    <name evidence="1" type="primary">uvrC</name>
    <name type="ordered locus">jhp_0760</name>
</gene>
<protein>
    <recommendedName>
        <fullName evidence="1">UvrABC system protein C</fullName>
        <shortName evidence="1">Protein UvrC</shortName>
    </recommendedName>
    <alternativeName>
        <fullName evidence="1">Excinuclease ABC subunit C</fullName>
    </alternativeName>
</protein>